<evidence type="ECO:0000250" key="1"/>
<evidence type="ECO:0000255" key="2">
    <source>
        <dbReference type="PROSITE-ProRule" id="PRU00388"/>
    </source>
</evidence>
<evidence type="ECO:0000255" key="3">
    <source>
        <dbReference type="PROSITE-ProRule" id="PRU10133"/>
    </source>
</evidence>
<reference key="1">
    <citation type="journal article" date="2004" name="Aquaculture">
        <title>Analysis of immune-relevant genes expressed in red sea bream spleen.</title>
        <authorList>
            <person name="Chen S.-L."/>
            <person name="Xu M.-Y."/>
            <person name="Hu S.-L."/>
            <person name="Li L."/>
        </authorList>
        <dbReference type="AGRICOLA" id="IND43674139"/>
    </citation>
    <scope>NUCLEOTIDE SEQUENCE [MRNA]</scope>
    <source>
        <tissue>Spleen</tissue>
    </source>
</reference>
<protein>
    <recommendedName>
        <fullName>SUMO-conjugating enzyme UBC9</fullName>
        <ecNumber>2.3.2.-</ecNumber>
    </recommendedName>
    <alternativeName>
        <fullName>RING-type E3 SUMO transferase UBC9</fullName>
    </alternativeName>
    <alternativeName>
        <fullName>SUMO-protein ligase</fullName>
    </alternativeName>
    <alternativeName>
        <fullName>Ubiquitin carrier protein I</fullName>
    </alternativeName>
    <alternativeName>
        <fullName>Ubiquitin-conjugating enzyme E2 I</fullName>
    </alternativeName>
    <alternativeName>
        <fullName>Ubiquitin-protein ligase I</fullName>
    </alternativeName>
</protein>
<dbReference type="EC" id="2.3.2.-"/>
<dbReference type="EMBL" id="AY190745">
    <property type="protein sequence ID" value="AAP20220.1"/>
    <property type="molecule type" value="mRNA"/>
</dbReference>
<dbReference type="SMR" id="Q6Y1Z4"/>
<dbReference type="UniPathway" id="UPA00886"/>
<dbReference type="GO" id="GO:0005634">
    <property type="term" value="C:nucleus"/>
    <property type="evidence" value="ECO:0007669"/>
    <property type="project" value="UniProtKB-SubCell"/>
</dbReference>
<dbReference type="GO" id="GO:0005524">
    <property type="term" value="F:ATP binding"/>
    <property type="evidence" value="ECO:0007669"/>
    <property type="project" value="UniProtKB-KW"/>
</dbReference>
<dbReference type="GO" id="GO:0016740">
    <property type="term" value="F:transferase activity"/>
    <property type="evidence" value="ECO:0007669"/>
    <property type="project" value="UniProtKB-KW"/>
</dbReference>
<dbReference type="GO" id="GO:0051301">
    <property type="term" value="P:cell division"/>
    <property type="evidence" value="ECO:0007669"/>
    <property type="project" value="UniProtKB-KW"/>
</dbReference>
<dbReference type="GO" id="GO:0007059">
    <property type="term" value="P:chromosome segregation"/>
    <property type="evidence" value="ECO:0007669"/>
    <property type="project" value="UniProtKB-KW"/>
</dbReference>
<dbReference type="GO" id="GO:0016925">
    <property type="term" value="P:protein sumoylation"/>
    <property type="evidence" value="ECO:0007669"/>
    <property type="project" value="UniProtKB-UniPathway"/>
</dbReference>
<dbReference type="CDD" id="cd23798">
    <property type="entry name" value="UBCc_UBE2I"/>
    <property type="match status" value="1"/>
</dbReference>
<dbReference type="FunFam" id="3.10.110.10:FF:000013">
    <property type="entry name" value="SUMO-conjugating enzyme UBC9"/>
    <property type="match status" value="1"/>
</dbReference>
<dbReference type="Gene3D" id="3.10.110.10">
    <property type="entry name" value="Ubiquitin Conjugating Enzyme"/>
    <property type="match status" value="1"/>
</dbReference>
<dbReference type="InterPro" id="IPR050113">
    <property type="entry name" value="Ub_conjugating_enzyme"/>
</dbReference>
<dbReference type="InterPro" id="IPR000608">
    <property type="entry name" value="UBQ-conjugat_E2_core"/>
</dbReference>
<dbReference type="InterPro" id="IPR023313">
    <property type="entry name" value="UBQ-conjugating_AS"/>
</dbReference>
<dbReference type="InterPro" id="IPR016135">
    <property type="entry name" value="UBQ-conjugating_enzyme/RWD"/>
</dbReference>
<dbReference type="PANTHER" id="PTHR24067">
    <property type="entry name" value="UBIQUITIN-CONJUGATING ENZYME E2"/>
    <property type="match status" value="1"/>
</dbReference>
<dbReference type="Pfam" id="PF00179">
    <property type="entry name" value="UQ_con"/>
    <property type="match status" value="1"/>
</dbReference>
<dbReference type="SMART" id="SM00212">
    <property type="entry name" value="UBCc"/>
    <property type="match status" value="1"/>
</dbReference>
<dbReference type="SUPFAM" id="SSF54495">
    <property type="entry name" value="UBC-like"/>
    <property type="match status" value="1"/>
</dbReference>
<dbReference type="PROSITE" id="PS00183">
    <property type="entry name" value="UBC_1"/>
    <property type="match status" value="1"/>
</dbReference>
<dbReference type="PROSITE" id="PS50127">
    <property type="entry name" value="UBC_2"/>
    <property type="match status" value="1"/>
</dbReference>
<name>UBC9_PAGMA</name>
<feature type="chain" id="PRO_0000268878" description="SUMO-conjugating enzyme UBC9">
    <location>
        <begin position="1"/>
        <end position="158"/>
    </location>
</feature>
<feature type="domain" description="UBC core" evidence="2">
    <location>
        <begin position="4"/>
        <end position="157"/>
    </location>
</feature>
<feature type="region of interest" description="Interaction with sumo1" evidence="1">
    <location>
        <begin position="13"/>
        <end position="18"/>
    </location>
</feature>
<feature type="active site" description="Glycyl thioester intermediate" evidence="2 3">
    <location>
        <position position="93"/>
    </location>
</feature>
<feature type="site" description="Interaction with ranbp2" evidence="1">
    <location>
        <position position="4"/>
    </location>
</feature>
<feature type="site" description="Interaction with ranbp2" evidence="1">
    <location>
        <position position="25"/>
    </location>
</feature>
<feature type="site" description="Interaction with ranbp2" evidence="1">
    <location>
        <position position="57"/>
    </location>
</feature>
<feature type="site" description="Substrate binding" evidence="1">
    <location>
        <begin position="100"/>
        <end position="101"/>
    </location>
</feature>
<keyword id="KW-0067">ATP-binding</keyword>
<keyword id="KW-0131">Cell cycle</keyword>
<keyword id="KW-0132">Cell division</keyword>
<keyword id="KW-0159">Chromosome partition</keyword>
<keyword id="KW-0498">Mitosis</keyword>
<keyword id="KW-0547">Nucleotide-binding</keyword>
<keyword id="KW-0539">Nucleus</keyword>
<keyword id="KW-0808">Transferase</keyword>
<keyword id="KW-0833">Ubl conjugation pathway</keyword>
<gene>
    <name type="primary">ube2i</name>
</gene>
<comment type="function">
    <text evidence="1">Accepts the ubiquitin-like proteins SUMO1, SUMO2 and SUMO3 from the UBLE1A-UBLE1B E1 complex and catalyzes their covalent attachment to other proteins with the help of an E3 ligase such as RANBP2 or CBX4. Essential for nuclear architecture and chromosome segregation.</text>
</comment>
<comment type="pathway">
    <text>Protein modification; protein sumoylation.</text>
</comment>
<comment type="subunit">
    <text evidence="1">Forms a tight complex with RANGAP1 and RANBP2.</text>
</comment>
<comment type="subcellular location">
    <subcellularLocation>
        <location evidence="1">Nucleus</location>
    </subcellularLocation>
</comment>
<comment type="similarity">
    <text evidence="2">Belongs to the ubiquitin-conjugating enzyme family.</text>
</comment>
<proteinExistence type="evidence at transcript level"/>
<accession>Q6Y1Z4</accession>
<sequence length="158" mass="17813">MSGIALSRLAQERKAWRKDHPLGLVAVPTKNPDGTMNLMNGECAIPGKKGTPWEGGLFKLRMLFKDDYPSSPPKCKFEPPLFHPNVYPSGTVCLSILEEDKDWRPAITIKQILLGIQELLNEPNIQDPAQAEAYTIFCQDRTEYEKRVRAQAKKFSPS</sequence>
<organism>
    <name type="scientific">Pagrus major</name>
    <name type="common">Red sea bream</name>
    <name type="synonym">Chrysophrys major</name>
    <dbReference type="NCBI Taxonomy" id="143350"/>
    <lineage>
        <taxon>Eukaryota</taxon>
        <taxon>Metazoa</taxon>
        <taxon>Chordata</taxon>
        <taxon>Craniata</taxon>
        <taxon>Vertebrata</taxon>
        <taxon>Euteleostomi</taxon>
        <taxon>Actinopterygii</taxon>
        <taxon>Neopterygii</taxon>
        <taxon>Teleostei</taxon>
        <taxon>Neoteleostei</taxon>
        <taxon>Acanthomorphata</taxon>
        <taxon>Eupercaria</taxon>
        <taxon>Spariformes</taxon>
        <taxon>Sparidae</taxon>
        <taxon>Pagrus</taxon>
    </lineage>
</organism>